<evidence type="ECO:0000255" key="1">
    <source>
        <dbReference type="HAMAP-Rule" id="MF_00484"/>
    </source>
</evidence>
<gene>
    <name evidence="1" type="primary">glgA</name>
    <name type="ordered locus">FTA_0512</name>
</gene>
<protein>
    <recommendedName>
        <fullName evidence="1">Glycogen synthase</fullName>
        <ecNumber evidence="1">2.4.1.21</ecNumber>
    </recommendedName>
    <alternativeName>
        <fullName evidence="1">Starch [bacterial glycogen] synthase</fullName>
    </alternativeName>
</protein>
<keyword id="KW-0320">Glycogen biosynthesis</keyword>
<keyword id="KW-0328">Glycosyltransferase</keyword>
<keyword id="KW-0808">Transferase</keyword>
<reference key="1">
    <citation type="journal article" date="2009" name="PLoS ONE">
        <title>Complete genome sequence of Francisella tularensis subspecies holarctica FTNF002-00.</title>
        <authorList>
            <person name="Barabote R.D."/>
            <person name="Xie G."/>
            <person name="Brettin T.S."/>
            <person name="Hinrichs S.H."/>
            <person name="Fey P.D."/>
            <person name="Jay J.J."/>
            <person name="Engle J.L."/>
            <person name="Godbole S.D."/>
            <person name="Noronha J.M."/>
            <person name="Scheuermann R.H."/>
            <person name="Zhou L.W."/>
            <person name="Lion C."/>
            <person name="Dempsey M.P."/>
        </authorList>
    </citation>
    <scope>NUCLEOTIDE SEQUENCE [LARGE SCALE GENOMIC DNA]</scope>
    <source>
        <strain>FTNF002-00 / FTA</strain>
    </source>
</reference>
<dbReference type="EC" id="2.4.1.21" evidence="1"/>
<dbReference type="EMBL" id="CP000803">
    <property type="protein sequence ID" value="ABU60988.1"/>
    <property type="molecule type" value="Genomic_DNA"/>
</dbReference>
<dbReference type="RefSeq" id="WP_010030994.1">
    <property type="nucleotide sequence ID" value="NC_009749.1"/>
</dbReference>
<dbReference type="SMR" id="A7NAI5"/>
<dbReference type="CAZy" id="GT5">
    <property type="family name" value="Glycosyltransferase Family 5"/>
</dbReference>
<dbReference type="KEGG" id="fta:FTA_0512"/>
<dbReference type="HOGENOM" id="CLU_009583_18_2_6"/>
<dbReference type="UniPathway" id="UPA00164"/>
<dbReference type="GO" id="GO:0005829">
    <property type="term" value="C:cytosol"/>
    <property type="evidence" value="ECO:0007669"/>
    <property type="project" value="TreeGrafter"/>
</dbReference>
<dbReference type="GO" id="GO:0009011">
    <property type="term" value="F:alpha-1,4-glucan glucosyltransferase (ADP-glucose donor) activity"/>
    <property type="evidence" value="ECO:0007669"/>
    <property type="project" value="UniProtKB-UniRule"/>
</dbReference>
<dbReference type="GO" id="GO:0004373">
    <property type="term" value="F:alpha-1,4-glucan glucosyltransferase (UDP-glucose donor) activity"/>
    <property type="evidence" value="ECO:0007669"/>
    <property type="project" value="InterPro"/>
</dbReference>
<dbReference type="GO" id="GO:0005978">
    <property type="term" value="P:glycogen biosynthetic process"/>
    <property type="evidence" value="ECO:0007669"/>
    <property type="project" value="UniProtKB-UniRule"/>
</dbReference>
<dbReference type="CDD" id="cd03791">
    <property type="entry name" value="GT5_Glycogen_synthase_DULL1-like"/>
    <property type="match status" value="1"/>
</dbReference>
<dbReference type="Gene3D" id="3.40.50.2000">
    <property type="entry name" value="Glycogen Phosphorylase B"/>
    <property type="match status" value="2"/>
</dbReference>
<dbReference type="HAMAP" id="MF_00484">
    <property type="entry name" value="Glycogen_synth"/>
    <property type="match status" value="1"/>
</dbReference>
<dbReference type="InterPro" id="IPR001296">
    <property type="entry name" value="Glyco_trans_1"/>
</dbReference>
<dbReference type="InterPro" id="IPR011835">
    <property type="entry name" value="GS/SS"/>
</dbReference>
<dbReference type="InterPro" id="IPR013534">
    <property type="entry name" value="Starch_synth_cat_dom"/>
</dbReference>
<dbReference type="NCBIfam" id="TIGR02095">
    <property type="entry name" value="glgA"/>
    <property type="match status" value="1"/>
</dbReference>
<dbReference type="NCBIfam" id="NF001899">
    <property type="entry name" value="PRK00654.1-2"/>
    <property type="match status" value="1"/>
</dbReference>
<dbReference type="PANTHER" id="PTHR45825:SF11">
    <property type="entry name" value="ALPHA AMYLASE DOMAIN-CONTAINING PROTEIN"/>
    <property type="match status" value="1"/>
</dbReference>
<dbReference type="PANTHER" id="PTHR45825">
    <property type="entry name" value="GRANULE-BOUND STARCH SYNTHASE 1, CHLOROPLASTIC/AMYLOPLASTIC"/>
    <property type="match status" value="1"/>
</dbReference>
<dbReference type="Pfam" id="PF08323">
    <property type="entry name" value="Glyco_transf_5"/>
    <property type="match status" value="1"/>
</dbReference>
<dbReference type="Pfam" id="PF00534">
    <property type="entry name" value="Glycos_transf_1"/>
    <property type="match status" value="1"/>
</dbReference>
<dbReference type="SUPFAM" id="SSF53756">
    <property type="entry name" value="UDP-Glycosyltransferase/glycogen phosphorylase"/>
    <property type="match status" value="1"/>
</dbReference>
<accession>A7NAI5</accession>
<proteinExistence type="inferred from homology"/>
<sequence length="489" mass="53547">MRVLHVCSELYPILKTGGLADVTAALPPALAGFGVDSRVLVPGFPAFINAIKDKQLLINIPSRFGAEEINIFLAKIPNTKIDIYVIDAPSLFARPGNPYADSSNQAYADNYLRFALLGWVAARISEGLDAKWKPEIVHSHDWHAGLVPAYIKASELASGKKAVKTVFTVHNLAYQGLFPMSVFTELDLPGIFLSMNGLEFYGQVSFMKAGLYFADKITTVSPTYAKEIQIYEQGCGLEGLLADRHNDLYGVLNGVDPQIWNPKKDSLIATNYSSTTVATGKAKCKLALQQMMGLAEKEDALLFGIVTRLTEQKGLNLLIEAIGEITSRGGQIVLLGSGDKALEEVFLAAAKKYSKSIAVQIGYDEEQAHRIIAGSDVIMVPSRFEPCGLTQLYGLTYGTLPLVHKVGGLADTIIDSSLENLADGTATGFVFDEFSVESLTLAIRRAFALYNRKTDWKKVRKTAMQQQVTWDSSAEKIYQIYKNLVIENN</sequence>
<organism>
    <name type="scientific">Francisella tularensis subsp. holarctica (strain FTNF002-00 / FTA)</name>
    <dbReference type="NCBI Taxonomy" id="458234"/>
    <lineage>
        <taxon>Bacteria</taxon>
        <taxon>Pseudomonadati</taxon>
        <taxon>Pseudomonadota</taxon>
        <taxon>Gammaproteobacteria</taxon>
        <taxon>Thiotrichales</taxon>
        <taxon>Francisellaceae</taxon>
        <taxon>Francisella</taxon>
    </lineage>
</organism>
<feature type="chain" id="PRO_1000014356" description="Glycogen synthase">
    <location>
        <begin position="1"/>
        <end position="489"/>
    </location>
</feature>
<feature type="binding site" evidence="1">
    <location>
        <position position="15"/>
    </location>
    <ligand>
        <name>ADP-alpha-D-glucose</name>
        <dbReference type="ChEBI" id="CHEBI:57498"/>
    </ligand>
</feature>
<name>GLGA_FRATF</name>
<comment type="function">
    <text evidence="1">Synthesizes alpha-1,4-glucan chains using ADP-glucose.</text>
</comment>
<comment type="catalytic activity">
    <reaction evidence="1">
        <text>[(1-&gt;4)-alpha-D-glucosyl](n) + ADP-alpha-D-glucose = [(1-&gt;4)-alpha-D-glucosyl](n+1) + ADP + H(+)</text>
        <dbReference type="Rhea" id="RHEA:18189"/>
        <dbReference type="Rhea" id="RHEA-COMP:9584"/>
        <dbReference type="Rhea" id="RHEA-COMP:9587"/>
        <dbReference type="ChEBI" id="CHEBI:15378"/>
        <dbReference type="ChEBI" id="CHEBI:15444"/>
        <dbReference type="ChEBI" id="CHEBI:57498"/>
        <dbReference type="ChEBI" id="CHEBI:456216"/>
        <dbReference type="EC" id="2.4.1.21"/>
    </reaction>
</comment>
<comment type="pathway">
    <text evidence="1">Glycan biosynthesis; glycogen biosynthesis.</text>
</comment>
<comment type="similarity">
    <text evidence="1">Belongs to the glycosyltransferase 1 family. Bacterial/plant glycogen synthase subfamily.</text>
</comment>